<organism>
    <name type="scientific">Streptococcus agalactiae serotype Ia (strain ATCC 27591 / A909 / CDC SS700)</name>
    <dbReference type="NCBI Taxonomy" id="205921"/>
    <lineage>
        <taxon>Bacteria</taxon>
        <taxon>Bacillati</taxon>
        <taxon>Bacillota</taxon>
        <taxon>Bacilli</taxon>
        <taxon>Lactobacillales</taxon>
        <taxon>Streptococcaceae</taxon>
        <taxon>Streptococcus</taxon>
    </lineage>
</organism>
<evidence type="ECO:0000255" key="1">
    <source>
        <dbReference type="HAMAP-Rule" id="MF_01818"/>
    </source>
</evidence>
<dbReference type="EC" id="3.1.26.11" evidence="1"/>
<dbReference type="EMBL" id="CP000114">
    <property type="protein sequence ID" value="ABA44771.1"/>
    <property type="molecule type" value="Genomic_DNA"/>
</dbReference>
<dbReference type="RefSeq" id="WP_000405388.1">
    <property type="nucleotide sequence ID" value="NC_007432.1"/>
</dbReference>
<dbReference type="SMR" id="Q3K0P4"/>
<dbReference type="GeneID" id="66886133"/>
<dbReference type="KEGG" id="sak:SAK_1296"/>
<dbReference type="HOGENOM" id="CLU_031317_2_0_9"/>
<dbReference type="GO" id="GO:0042781">
    <property type="term" value="F:3'-tRNA processing endoribonuclease activity"/>
    <property type="evidence" value="ECO:0007669"/>
    <property type="project" value="UniProtKB-UniRule"/>
</dbReference>
<dbReference type="GO" id="GO:0008270">
    <property type="term" value="F:zinc ion binding"/>
    <property type="evidence" value="ECO:0007669"/>
    <property type="project" value="UniProtKB-UniRule"/>
</dbReference>
<dbReference type="CDD" id="cd07717">
    <property type="entry name" value="RNaseZ_ZiPD-like_MBL-fold"/>
    <property type="match status" value="1"/>
</dbReference>
<dbReference type="FunFam" id="3.60.15.10:FF:000002">
    <property type="entry name" value="Ribonuclease Z"/>
    <property type="match status" value="1"/>
</dbReference>
<dbReference type="Gene3D" id="3.60.15.10">
    <property type="entry name" value="Ribonuclease Z/Hydroxyacylglutathione hydrolase-like"/>
    <property type="match status" value="1"/>
</dbReference>
<dbReference type="HAMAP" id="MF_01818">
    <property type="entry name" value="RNase_Z_BN"/>
    <property type="match status" value="1"/>
</dbReference>
<dbReference type="InterPro" id="IPR001279">
    <property type="entry name" value="Metallo-B-lactamas"/>
</dbReference>
<dbReference type="InterPro" id="IPR036866">
    <property type="entry name" value="RibonucZ/Hydroxyglut_hydro"/>
</dbReference>
<dbReference type="InterPro" id="IPR013471">
    <property type="entry name" value="RNase_Z/BN"/>
</dbReference>
<dbReference type="NCBIfam" id="NF000801">
    <property type="entry name" value="PRK00055.1-3"/>
    <property type="match status" value="1"/>
</dbReference>
<dbReference type="NCBIfam" id="TIGR02651">
    <property type="entry name" value="RNase_Z"/>
    <property type="match status" value="1"/>
</dbReference>
<dbReference type="PANTHER" id="PTHR46018">
    <property type="entry name" value="ZINC PHOSPHODIESTERASE ELAC PROTEIN 1"/>
    <property type="match status" value="1"/>
</dbReference>
<dbReference type="PANTHER" id="PTHR46018:SF2">
    <property type="entry name" value="ZINC PHOSPHODIESTERASE ELAC PROTEIN 1"/>
    <property type="match status" value="1"/>
</dbReference>
<dbReference type="Pfam" id="PF00753">
    <property type="entry name" value="Lactamase_B"/>
    <property type="match status" value="1"/>
</dbReference>
<dbReference type="SUPFAM" id="SSF56281">
    <property type="entry name" value="Metallo-hydrolase/oxidoreductase"/>
    <property type="match status" value="1"/>
</dbReference>
<proteinExistence type="inferred from homology"/>
<accession>Q3K0P4</accession>
<protein>
    <recommendedName>
        <fullName evidence="1">Ribonuclease Z</fullName>
        <shortName evidence="1">RNase Z</shortName>
        <ecNumber evidence="1">3.1.26.11</ecNumber>
    </recommendedName>
    <alternativeName>
        <fullName evidence="1">tRNA 3 endonuclease</fullName>
    </alternativeName>
    <alternativeName>
        <fullName evidence="1">tRNase Z</fullName>
    </alternativeName>
</protein>
<reference key="1">
    <citation type="journal article" date="2005" name="Proc. Natl. Acad. Sci. U.S.A.">
        <title>Genome analysis of multiple pathogenic isolates of Streptococcus agalactiae: implications for the microbial 'pan-genome'.</title>
        <authorList>
            <person name="Tettelin H."/>
            <person name="Masignani V."/>
            <person name="Cieslewicz M.J."/>
            <person name="Donati C."/>
            <person name="Medini D."/>
            <person name="Ward N.L."/>
            <person name="Angiuoli S.V."/>
            <person name="Crabtree J."/>
            <person name="Jones A.L."/>
            <person name="Durkin A.S."/>
            <person name="DeBoy R.T."/>
            <person name="Davidsen T.M."/>
            <person name="Mora M."/>
            <person name="Scarselli M."/>
            <person name="Margarit y Ros I."/>
            <person name="Peterson J.D."/>
            <person name="Hauser C.R."/>
            <person name="Sundaram J.P."/>
            <person name="Nelson W.C."/>
            <person name="Madupu R."/>
            <person name="Brinkac L.M."/>
            <person name="Dodson R.J."/>
            <person name="Rosovitz M.J."/>
            <person name="Sullivan S.A."/>
            <person name="Daugherty S.C."/>
            <person name="Haft D.H."/>
            <person name="Selengut J."/>
            <person name="Gwinn M.L."/>
            <person name="Zhou L."/>
            <person name="Zafar N."/>
            <person name="Khouri H."/>
            <person name="Radune D."/>
            <person name="Dimitrov G."/>
            <person name="Watkins K."/>
            <person name="O'Connor K.J."/>
            <person name="Smith S."/>
            <person name="Utterback T.R."/>
            <person name="White O."/>
            <person name="Rubens C.E."/>
            <person name="Grandi G."/>
            <person name="Madoff L.C."/>
            <person name="Kasper D.L."/>
            <person name="Telford J.L."/>
            <person name="Wessels M.R."/>
            <person name="Rappuoli R."/>
            <person name="Fraser C.M."/>
        </authorList>
    </citation>
    <scope>NUCLEOTIDE SEQUENCE [LARGE SCALE GENOMIC DNA]</scope>
    <source>
        <strain>ATCC 27591 / A909 / CDC SS700</strain>
    </source>
</reference>
<feature type="chain" id="PRO_1000070333" description="Ribonuclease Z">
    <location>
        <begin position="1"/>
        <end position="309"/>
    </location>
</feature>
<feature type="active site" description="Proton acceptor" evidence="1">
    <location>
        <position position="67"/>
    </location>
</feature>
<feature type="binding site" evidence="1">
    <location>
        <position position="63"/>
    </location>
    <ligand>
        <name>Zn(2+)</name>
        <dbReference type="ChEBI" id="CHEBI:29105"/>
        <label>1</label>
        <note>catalytic</note>
    </ligand>
</feature>
<feature type="binding site" evidence="1">
    <location>
        <position position="65"/>
    </location>
    <ligand>
        <name>Zn(2+)</name>
        <dbReference type="ChEBI" id="CHEBI:29105"/>
        <label>1</label>
        <note>catalytic</note>
    </ligand>
</feature>
<feature type="binding site" evidence="1">
    <location>
        <position position="67"/>
    </location>
    <ligand>
        <name>Zn(2+)</name>
        <dbReference type="ChEBI" id="CHEBI:29105"/>
        <label>2</label>
        <note>catalytic</note>
    </ligand>
</feature>
<feature type="binding site" evidence="1">
    <location>
        <position position="68"/>
    </location>
    <ligand>
        <name>Zn(2+)</name>
        <dbReference type="ChEBI" id="CHEBI:29105"/>
        <label>2</label>
        <note>catalytic</note>
    </ligand>
</feature>
<feature type="binding site" evidence="1">
    <location>
        <position position="145"/>
    </location>
    <ligand>
        <name>Zn(2+)</name>
        <dbReference type="ChEBI" id="CHEBI:29105"/>
        <label>1</label>
        <note>catalytic</note>
    </ligand>
</feature>
<feature type="binding site" evidence="1">
    <location>
        <position position="216"/>
    </location>
    <ligand>
        <name>Zn(2+)</name>
        <dbReference type="ChEBI" id="CHEBI:29105"/>
        <label>1</label>
        <note>catalytic</note>
    </ligand>
</feature>
<feature type="binding site" evidence="1">
    <location>
        <position position="216"/>
    </location>
    <ligand>
        <name>Zn(2+)</name>
        <dbReference type="ChEBI" id="CHEBI:29105"/>
        <label>2</label>
        <note>catalytic</note>
    </ligand>
</feature>
<feature type="binding site" evidence="1">
    <location>
        <position position="274"/>
    </location>
    <ligand>
        <name>Zn(2+)</name>
        <dbReference type="ChEBI" id="CHEBI:29105"/>
        <label>2</label>
        <note>catalytic</note>
    </ligand>
</feature>
<sequence length="309" mass="34441">MEIQFLGTGAGQPAKARNVSSLVLKLLDEINEVWMFDCGEGTQRQILETTIKPRKVKKIFITHMHGDHVFGLPGFLSSRAFQANEEQTDLDIYGPVGIKSFVMTGLRTSGSRLPYRIHFHEFDESSLGKIMETDKFTVYAEKLDHTIFCMGYRVVQKDLEGTLDAEALKLAGVPFGPLFGKVKNGENVTLEDGREIIAKDYISEPKKGKVITILGDTRKTDASIRLALGADVLVHESTYGKGDERIAKSHGHSTNMQAADIAKQANAKRLLLNHVSARFMGRDCWQMEEDAKTIFSNTHLVRDLEEVGI</sequence>
<gene>
    <name evidence="1" type="primary">rnz</name>
    <name type="ordered locus">SAK_1296</name>
</gene>
<keyword id="KW-0255">Endonuclease</keyword>
<keyword id="KW-0378">Hydrolase</keyword>
<keyword id="KW-0479">Metal-binding</keyword>
<keyword id="KW-0540">Nuclease</keyword>
<keyword id="KW-0819">tRNA processing</keyword>
<keyword id="KW-0862">Zinc</keyword>
<name>RNZ_STRA1</name>
<comment type="function">
    <text evidence="1">Zinc phosphodiesterase, which displays some tRNA 3'-processing endonuclease activity. Probably involved in tRNA maturation, by removing a 3'-trailer from precursor tRNA.</text>
</comment>
<comment type="catalytic activity">
    <reaction evidence="1">
        <text>Endonucleolytic cleavage of RNA, removing extra 3' nucleotides from tRNA precursor, generating 3' termini of tRNAs. A 3'-hydroxy group is left at the tRNA terminus and a 5'-phosphoryl group is left at the trailer molecule.</text>
        <dbReference type="EC" id="3.1.26.11"/>
    </reaction>
</comment>
<comment type="cofactor">
    <cofactor evidence="1">
        <name>Zn(2+)</name>
        <dbReference type="ChEBI" id="CHEBI:29105"/>
    </cofactor>
    <text evidence="1">Binds 2 Zn(2+) ions.</text>
</comment>
<comment type="subunit">
    <text evidence="1">Homodimer.</text>
</comment>
<comment type="similarity">
    <text evidence="1">Belongs to the RNase Z family.</text>
</comment>